<name>EX7L_CAMJJ</name>
<feature type="chain" id="PRO_0000303779" description="Exodeoxyribonuclease 7 large subunit">
    <location>
        <begin position="1"/>
        <end position="387"/>
    </location>
</feature>
<proteinExistence type="inferred from homology"/>
<sequence length="387" mass="44087">MTPTELNLKAKALLETHFDDIVLSGEISKITLHGSGHWYFDLKDERSSIACAMFKGANLKVGFKPAVGNFLELCGSVSLYPESGRYQFIATSMKKAGFGDLEAQFLALKERLQKEGLFDPRFKKSLPKFPKKVGIITSKTSAALQDMLKLIHQKEYFLAKIYIFDALTQGNNAPFSLIQALKKADDMDLDVLIIARGGGSREDLFCFNDENLAREIFKAKTPIISAIGHEIDYVISDFVADFRAPTPSAAIDTLFYSKLDIEQSLDLMEEKLMQLWNYKIQNYENLLLNLSKFFKFNSLPKIIDEKIKQSHNIEKQLNHLLANQMRYNELKLDKLQNAYLQHENFFNKSKKFICIRKNGKIANLEDLKSDDIVILSSQTSQKEAKIL</sequence>
<comment type="function">
    <text evidence="1">Bidirectionally degrades single-stranded DNA into large acid-insoluble oligonucleotides, which are then degraded further into small acid-soluble oligonucleotides.</text>
</comment>
<comment type="catalytic activity">
    <reaction evidence="1">
        <text>Exonucleolytic cleavage in either 5'- to 3'- or 3'- to 5'-direction to yield nucleoside 5'-phosphates.</text>
        <dbReference type="EC" id="3.1.11.6"/>
    </reaction>
</comment>
<comment type="subunit">
    <text evidence="1">Heterooligomer composed of large and small subunits.</text>
</comment>
<comment type="subcellular location">
    <subcellularLocation>
        <location evidence="1">Cytoplasm</location>
    </subcellularLocation>
</comment>
<comment type="similarity">
    <text evidence="1">Belongs to the XseA family.</text>
</comment>
<protein>
    <recommendedName>
        <fullName evidence="1">Exodeoxyribonuclease 7 large subunit</fullName>
        <ecNumber evidence="1">3.1.11.6</ecNumber>
    </recommendedName>
    <alternativeName>
        <fullName evidence="1">Exodeoxyribonuclease VII large subunit</fullName>
        <shortName evidence="1">Exonuclease VII large subunit</shortName>
    </alternativeName>
</protein>
<keyword id="KW-0963">Cytoplasm</keyword>
<keyword id="KW-0269">Exonuclease</keyword>
<keyword id="KW-0378">Hydrolase</keyword>
<keyword id="KW-0540">Nuclease</keyword>
<gene>
    <name evidence="1" type="primary">xseA</name>
    <name type="ordered locus">CJJ81176_0347</name>
</gene>
<reference key="1">
    <citation type="submission" date="2006-12" db="EMBL/GenBank/DDBJ databases">
        <authorList>
            <person name="Fouts D.E."/>
            <person name="Nelson K.E."/>
            <person name="Sebastian Y."/>
        </authorList>
    </citation>
    <scope>NUCLEOTIDE SEQUENCE [LARGE SCALE GENOMIC DNA]</scope>
    <source>
        <strain>81-176</strain>
    </source>
</reference>
<accession>A1VY44</accession>
<evidence type="ECO:0000255" key="1">
    <source>
        <dbReference type="HAMAP-Rule" id="MF_00378"/>
    </source>
</evidence>
<dbReference type="EC" id="3.1.11.6" evidence="1"/>
<dbReference type="EMBL" id="CP000538">
    <property type="protein sequence ID" value="EAQ73041.1"/>
    <property type="molecule type" value="Genomic_DNA"/>
</dbReference>
<dbReference type="RefSeq" id="WP_002859429.1">
    <property type="nucleotide sequence ID" value="NC_008787.1"/>
</dbReference>
<dbReference type="SMR" id="A1VY44"/>
<dbReference type="KEGG" id="cjj:CJJ81176_0347"/>
<dbReference type="eggNOG" id="COG1570">
    <property type="taxonomic scope" value="Bacteria"/>
</dbReference>
<dbReference type="HOGENOM" id="CLU_023625_2_0_7"/>
<dbReference type="Proteomes" id="UP000000646">
    <property type="component" value="Chromosome"/>
</dbReference>
<dbReference type="GO" id="GO:0005737">
    <property type="term" value="C:cytoplasm"/>
    <property type="evidence" value="ECO:0007669"/>
    <property type="project" value="UniProtKB-SubCell"/>
</dbReference>
<dbReference type="GO" id="GO:0009318">
    <property type="term" value="C:exodeoxyribonuclease VII complex"/>
    <property type="evidence" value="ECO:0007669"/>
    <property type="project" value="InterPro"/>
</dbReference>
<dbReference type="GO" id="GO:0008855">
    <property type="term" value="F:exodeoxyribonuclease VII activity"/>
    <property type="evidence" value="ECO:0007669"/>
    <property type="project" value="UniProtKB-UniRule"/>
</dbReference>
<dbReference type="GO" id="GO:0003676">
    <property type="term" value="F:nucleic acid binding"/>
    <property type="evidence" value="ECO:0007669"/>
    <property type="project" value="InterPro"/>
</dbReference>
<dbReference type="GO" id="GO:0006308">
    <property type="term" value="P:DNA catabolic process"/>
    <property type="evidence" value="ECO:0007669"/>
    <property type="project" value="UniProtKB-UniRule"/>
</dbReference>
<dbReference type="CDD" id="cd04489">
    <property type="entry name" value="ExoVII_LU_OBF"/>
    <property type="match status" value="1"/>
</dbReference>
<dbReference type="HAMAP" id="MF_00378">
    <property type="entry name" value="Exonuc_7_L"/>
    <property type="match status" value="1"/>
</dbReference>
<dbReference type="InterPro" id="IPR003753">
    <property type="entry name" value="Exonuc_VII_L"/>
</dbReference>
<dbReference type="InterPro" id="IPR020579">
    <property type="entry name" value="Exonuc_VII_lsu_C"/>
</dbReference>
<dbReference type="InterPro" id="IPR025824">
    <property type="entry name" value="OB-fold_nuc-bd_dom"/>
</dbReference>
<dbReference type="NCBIfam" id="TIGR00237">
    <property type="entry name" value="xseA"/>
    <property type="match status" value="1"/>
</dbReference>
<dbReference type="PANTHER" id="PTHR30008">
    <property type="entry name" value="EXODEOXYRIBONUCLEASE 7 LARGE SUBUNIT"/>
    <property type="match status" value="1"/>
</dbReference>
<dbReference type="PANTHER" id="PTHR30008:SF0">
    <property type="entry name" value="EXODEOXYRIBONUCLEASE 7 LARGE SUBUNIT"/>
    <property type="match status" value="1"/>
</dbReference>
<dbReference type="Pfam" id="PF02601">
    <property type="entry name" value="Exonuc_VII_L"/>
    <property type="match status" value="1"/>
</dbReference>
<dbReference type="Pfam" id="PF13742">
    <property type="entry name" value="tRNA_anti_2"/>
    <property type="match status" value="1"/>
</dbReference>
<organism>
    <name type="scientific">Campylobacter jejuni subsp. jejuni serotype O:23/36 (strain 81-176)</name>
    <dbReference type="NCBI Taxonomy" id="354242"/>
    <lineage>
        <taxon>Bacteria</taxon>
        <taxon>Pseudomonadati</taxon>
        <taxon>Campylobacterota</taxon>
        <taxon>Epsilonproteobacteria</taxon>
        <taxon>Campylobacterales</taxon>
        <taxon>Campylobacteraceae</taxon>
        <taxon>Campylobacter</taxon>
    </lineage>
</organism>